<organism>
    <name type="scientific">Oryctolagus cuniculus</name>
    <name type="common">Rabbit</name>
    <dbReference type="NCBI Taxonomy" id="9986"/>
    <lineage>
        <taxon>Eukaryota</taxon>
        <taxon>Metazoa</taxon>
        <taxon>Chordata</taxon>
        <taxon>Craniata</taxon>
        <taxon>Vertebrata</taxon>
        <taxon>Euteleostomi</taxon>
        <taxon>Mammalia</taxon>
        <taxon>Eutheria</taxon>
        <taxon>Euarchontoglires</taxon>
        <taxon>Glires</taxon>
        <taxon>Lagomorpha</taxon>
        <taxon>Leporidae</taxon>
        <taxon>Oryctolagus</taxon>
    </lineage>
</organism>
<accession>P67828</accession>
<accession>P35506</accession>
<name>KC1A_RABIT</name>
<keyword id="KW-0007">Acetylation</keyword>
<keyword id="KW-0067">ATP-binding</keyword>
<keyword id="KW-0131">Cell cycle</keyword>
<keyword id="KW-0132">Cell division</keyword>
<keyword id="KW-0966">Cell projection</keyword>
<keyword id="KW-0137">Centromere</keyword>
<keyword id="KW-0158">Chromosome</keyword>
<keyword id="KW-0963">Cytoplasm</keyword>
<keyword id="KW-0206">Cytoskeleton</keyword>
<keyword id="KW-0418">Kinase</keyword>
<keyword id="KW-0995">Kinetochore</keyword>
<keyword id="KW-0498">Mitosis</keyword>
<keyword id="KW-0547">Nucleotide-binding</keyword>
<keyword id="KW-0539">Nucleus</keyword>
<keyword id="KW-0597">Phosphoprotein</keyword>
<keyword id="KW-1185">Reference proteome</keyword>
<keyword id="KW-0723">Serine/threonine-protein kinase</keyword>
<keyword id="KW-0808">Transferase</keyword>
<keyword id="KW-0879">Wnt signaling pathway</keyword>
<feature type="initiator methionine" description="Removed" evidence="1">
    <location>
        <position position="1"/>
    </location>
</feature>
<feature type="chain" id="PRO_0000192825" description="Casein kinase I isoform alpha">
    <location>
        <begin position="2"/>
        <end position="325"/>
    </location>
</feature>
<feature type="domain" description="Protein kinase" evidence="3">
    <location>
        <begin position="17"/>
        <end position="285"/>
    </location>
</feature>
<feature type="active site" description="Proton acceptor" evidence="3 4">
    <location>
        <position position="136"/>
    </location>
</feature>
<feature type="binding site" evidence="3">
    <location>
        <begin position="23"/>
        <end position="31"/>
    </location>
    <ligand>
        <name>ATP</name>
        <dbReference type="ChEBI" id="CHEBI:30616"/>
    </ligand>
</feature>
<feature type="binding site" evidence="3">
    <location>
        <position position="46"/>
    </location>
    <ligand>
        <name>ATP</name>
        <dbReference type="ChEBI" id="CHEBI:30616"/>
    </ligand>
</feature>
<feature type="modified residue" description="N-acetylalanine" evidence="1">
    <location>
        <position position="2"/>
    </location>
</feature>
<feature type="modified residue" description="Phosphoserine" evidence="1">
    <location>
        <position position="4"/>
    </location>
</feature>
<feature type="modified residue" description="N6-acetyllysine" evidence="1">
    <location>
        <position position="8"/>
    </location>
</feature>
<gene>
    <name type="primary">CSNK1A1</name>
</gene>
<comment type="function">
    <text evidence="1 2">Casein kinases are operationally defined by their preferential utilization of acidic proteins such as caseins as substrates. Can phosphorylate a large number of proteins. Participates in Wnt signaling. Phosphorylates CTNNB1 at 'Ser-45' (By similarity). May phosphorylate PER1 and PER2 (By similarity). May play a role in segregating chromosomes during mitosis. May play a role in keratin cytoskeleton disassembly and thereby, it may regulate epithelial cell migration (By similarity). Acts as a positive regulator of mTORC1 and mTORC2 signaling in response to nutrients by mediating phosphorylation of DEPTOR inhibitor (By similarity). Acts as an inhibitor of NLRP3 inflammasome assembly by mediating phosphorylation of NLRP3 (By similarity).</text>
</comment>
<comment type="catalytic activity">
    <reaction>
        <text>L-seryl-[protein] + ATP = O-phospho-L-seryl-[protein] + ADP + H(+)</text>
        <dbReference type="Rhea" id="RHEA:17989"/>
        <dbReference type="Rhea" id="RHEA-COMP:9863"/>
        <dbReference type="Rhea" id="RHEA-COMP:11604"/>
        <dbReference type="ChEBI" id="CHEBI:15378"/>
        <dbReference type="ChEBI" id="CHEBI:29999"/>
        <dbReference type="ChEBI" id="CHEBI:30616"/>
        <dbReference type="ChEBI" id="CHEBI:83421"/>
        <dbReference type="ChEBI" id="CHEBI:456216"/>
        <dbReference type="EC" id="2.7.11.1"/>
    </reaction>
</comment>
<comment type="catalytic activity">
    <reaction>
        <text>L-threonyl-[protein] + ATP = O-phospho-L-threonyl-[protein] + ADP + H(+)</text>
        <dbReference type="Rhea" id="RHEA:46608"/>
        <dbReference type="Rhea" id="RHEA-COMP:11060"/>
        <dbReference type="Rhea" id="RHEA-COMP:11605"/>
        <dbReference type="ChEBI" id="CHEBI:15378"/>
        <dbReference type="ChEBI" id="CHEBI:30013"/>
        <dbReference type="ChEBI" id="CHEBI:30616"/>
        <dbReference type="ChEBI" id="CHEBI:61977"/>
        <dbReference type="ChEBI" id="CHEBI:456216"/>
        <dbReference type="EC" id="2.7.11.1"/>
    </reaction>
</comment>
<comment type="subunit">
    <text evidence="1">Interacts with the Axin complex (By similarity). Interacts with TUT1, leading to TUT1 phosphorylation (By similarity). Interacts with FAM83A, FAM83B, FAM83C, FAM83D, FAM83E, FAM83F, FAM83G and FAM83H (via DUF1669). Interaction with FAM83H recruits CSNK1A1 to keratin filaments (By similarity).</text>
</comment>
<comment type="interaction">
    <interactant intactId="EBI-7540603">
        <id>P67828</id>
    </interactant>
    <interactant intactId="EBI-359815">
        <id>P31946</id>
        <label>YWHAB</label>
    </interactant>
    <organismsDiffer>true</organismsDiffer>
    <experiments>3</experiments>
</comment>
<comment type="interaction">
    <interactant intactId="EBI-7540603">
        <id>P67828</id>
    </interactant>
    <interactant intactId="EBI-356462">
        <id>P62260</id>
        <label>Ywhae</label>
    </interactant>
    <organismsDiffer>true</organismsDiffer>
    <experiments>2</experiments>
</comment>
<comment type="interaction">
    <interactant intactId="EBI-7540603">
        <id>P67828</id>
    </interactant>
    <interactant intactId="EBI-359832">
        <id>P61981</id>
        <label>YWHAG</label>
    </interactant>
    <organismsDiffer>true</organismsDiffer>
    <experiments>3</experiments>
</comment>
<comment type="interaction">
    <interactant intactId="EBI-7540603">
        <id>P67828</id>
    </interactant>
    <interactant intactId="EBI-306940">
        <id>Q04917</id>
        <label>YWHAH</label>
    </interactant>
    <organismsDiffer>true</organismsDiffer>
    <experiments>8</experiments>
</comment>
<comment type="interaction">
    <interactant intactId="EBI-7540603">
        <id>P67828</id>
    </interactant>
    <interactant intactId="EBI-359854">
        <id>P27348</id>
        <label>YWHAQ</label>
    </interactant>
    <organismsDiffer>true</organismsDiffer>
    <experiments>2</experiments>
</comment>
<comment type="interaction">
    <interactant intactId="EBI-7540603">
        <id>P67828</id>
    </interactant>
    <interactant intactId="EBI-347088">
        <id>P63104</id>
        <label>YWHAZ</label>
    </interactant>
    <organismsDiffer>true</organismsDiffer>
    <experiments>4</experiments>
</comment>
<comment type="subcellular location">
    <subcellularLocation>
        <location evidence="1">Cytoplasm</location>
    </subcellularLocation>
    <subcellularLocation>
        <location evidence="1">Cytoplasm</location>
        <location evidence="1">Cytoskeleton</location>
        <location evidence="1">Microtubule organizing center</location>
        <location evidence="1">Centrosome</location>
    </subcellularLocation>
    <subcellularLocation>
        <location evidence="1">Chromosome</location>
        <location evidence="1">Centromere</location>
        <location evidence="1">Kinetochore</location>
    </subcellularLocation>
    <subcellularLocation>
        <location evidence="1">Nucleus speckle</location>
    </subcellularLocation>
    <subcellularLocation>
        <location evidence="2">Cytoplasm</location>
        <location evidence="2">Cytoskeleton</location>
        <location evidence="2">Cilium basal body</location>
    </subcellularLocation>
    <subcellularLocation>
        <location evidence="2">Cytoplasm</location>
        <location evidence="2">Cytoskeleton</location>
        <location evidence="2">Spindle</location>
    </subcellularLocation>
    <text evidence="1">Localizes to the centrosome in interphase cells, and to kinetochore fibers during mitosis. Also recruited to the keratin cytoskeleton.</text>
</comment>
<comment type="PTM">
    <text evidence="1">Phosphorylated by MTOR in response to mitogenic stimulation, leading to its activation.</text>
</comment>
<comment type="similarity">
    <text evidence="5">Belongs to the protein kinase superfamily. CK1 Ser/Thr protein kinase family. Casein kinase I subfamily.</text>
</comment>
<protein>
    <recommendedName>
        <fullName>Casein kinase I isoform alpha</fullName>
        <shortName>CKI-alpha</shortName>
        <ecNumber>2.7.11.1</ecNumber>
    </recommendedName>
    <alternativeName>
        <fullName>CK1</fullName>
    </alternativeName>
</protein>
<reference key="1">
    <citation type="submission" date="1996-07" db="EMBL/GenBank/DDBJ databases">
        <title>Rabbit muscle casein kinase 1 alpha.</title>
        <authorList>
            <person name="Zhai L."/>
            <person name="DePaoli-Roach A.A."/>
            <person name="Roach P.J."/>
        </authorList>
    </citation>
    <scope>NUCLEOTIDE SEQUENCE [MRNA]</scope>
    <source>
        <tissue>Skeletal muscle</tissue>
    </source>
</reference>
<evidence type="ECO:0000250" key="1">
    <source>
        <dbReference type="UniProtKB" id="P48729"/>
    </source>
</evidence>
<evidence type="ECO:0000250" key="2">
    <source>
        <dbReference type="UniProtKB" id="Q8BK63"/>
    </source>
</evidence>
<evidence type="ECO:0000255" key="3">
    <source>
        <dbReference type="PROSITE-ProRule" id="PRU00159"/>
    </source>
</evidence>
<evidence type="ECO:0000255" key="4">
    <source>
        <dbReference type="PROSITE-ProRule" id="PRU10027"/>
    </source>
</evidence>
<evidence type="ECO:0000305" key="5"/>
<sequence>MASSSGSKAEFIVGGKYKLVRKIGSGSFGDIYLAINITNGEEVAVKLESQKARHPQLLYESKLYKILQGGVGIPHIRWYGQEKDYNVLVMDLLGPSLEDLFNFCSRRFTMKTVLMLADQMISRIEYVHTKNFIHRDIKPDNFLMGIGRHCNKLFLIDFGLAKKYRDNRTRQHIPYREDKNLTGTARYASINAHLGIEQSRRDDMESLGYVLMYFNRTSLPWQGLKAATKKQKYEKISEKKMSTPVEVLCKGFPAEFAMYLNYCRGLRFEEAPDYMYLRQLFRILFRTLNHQYDYTFDWTMLKQKAAQQAASSSGQGQQAQTPTGF</sequence>
<proteinExistence type="evidence at protein level"/>
<dbReference type="EC" id="2.7.11.1"/>
<dbReference type="EMBL" id="U59166">
    <property type="protein sequence ID" value="AAB03992.1"/>
    <property type="molecule type" value="mRNA"/>
</dbReference>
<dbReference type="RefSeq" id="NP_001075842.1">
    <property type="nucleotide sequence ID" value="NM_001082373.1"/>
</dbReference>
<dbReference type="SMR" id="P67828"/>
<dbReference type="IntAct" id="P67828">
    <property type="interactions" value="9"/>
</dbReference>
<dbReference type="MINT" id="P67828"/>
<dbReference type="STRING" id="9986.ENSOCUP00000037641"/>
<dbReference type="iPTMnet" id="P67828"/>
<dbReference type="PaxDb" id="9986-ENSOCUP00000018081"/>
<dbReference type="GeneID" id="100009227"/>
<dbReference type="KEGG" id="ocu:100009227"/>
<dbReference type="CTD" id="1452"/>
<dbReference type="eggNOG" id="KOG1163">
    <property type="taxonomic scope" value="Eukaryota"/>
</dbReference>
<dbReference type="HOGENOM" id="CLU_019279_2_7_1"/>
<dbReference type="InParanoid" id="P67828"/>
<dbReference type="OMA" id="ESRVYKY"/>
<dbReference type="OrthoDB" id="5800476at2759"/>
<dbReference type="Proteomes" id="UP000001811">
    <property type="component" value="Unplaced"/>
</dbReference>
<dbReference type="GO" id="GO:0005813">
    <property type="term" value="C:centrosome"/>
    <property type="evidence" value="ECO:0007669"/>
    <property type="project" value="UniProtKB-SubCell"/>
</dbReference>
<dbReference type="GO" id="GO:0036064">
    <property type="term" value="C:ciliary basal body"/>
    <property type="evidence" value="ECO:0000250"/>
    <property type="project" value="UniProtKB"/>
</dbReference>
<dbReference type="GO" id="GO:0005737">
    <property type="term" value="C:cytoplasm"/>
    <property type="evidence" value="ECO:0007669"/>
    <property type="project" value="UniProtKB-SubCell"/>
</dbReference>
<dbReference type="GO" id="GO:0000776">
    <property type="term" value="C:kinetochore"/>
    <property type="evidence" value="ECO:0007669"/>
    <property type="project" value="UniProtKB-KW"/>
</dbReference>
<dbReference type="GO" id="GO:0016607">
    <property type="term" value="C:nuclear speck"/>
    <property type="evidence" value="ECO:0000250"/>
    <property type="project" value="UniProtKB"/>
</dbReference>
<dbReference type="GO" id="GO:0005819">
    <property type="term" value="C:spindle"/>
    <property type="evidence" value="ECO:0000250"/>
    <property type="project" value="UniProtKB"/>
</dbReference>
<dbReference type="GO" id="GO:0005524">
    <property type="term" value="F:ATP binding"/>
    <property type="evidence" value="ECO:0007669"/>
    <property type="project" value="UniProtKB-KW"/>
</dbReference>
<dbReference type="GO" id="GO:0004672">
    <property type="term" value="F:protein kinase activity"/>
    <property type="evidence" value="ECO:0000250"/>
    <property type="project" value="UniProtKB"/>
</dbReference>
<dbReference type="GO" id="GO:0106310">
    <property type="term" value="F:protein serine kinase activity"/>
    <property type="evidence" value="ECO:0007669"/>
    <property type="project" value="RHEA"/>
</dbReference>
<dbReference type="GO" id="GO:0004674">
    <property type="term" value="F:protein serine/threonine kinase activity"/>
    <property type="evidence" value="ECO:0000250"/>
    <property type="project" value="UniProtKB"/>
</dbReference>
<dbReference type="GO" id="GO:0051301">
    <property type="term" value="P:cell division"/>
    <property type="evidence" value="ECO:0007669"/>
    <property type="project" value="UniProtKB-KW"/>
</dbReference>
<dbReference type="GO" id="GO:0045104">
    <property type="term" value="P:intermediate filament cytoskeleton organization"/>
    <property type="evidence" value="ECO:0000250"/>
    <property type="project" value="UniProtKB"/>
</dbReference>
<dbReference type="GO" id="GO:1900226">
    <property type="term" value="P:negative regulation of NLRP3 inflammasome complex assembly"/>
    <property type="evidence" value="ECO:0000250"/>
    <property type="project" value="UniProtKB"/>
</dbReference>
<dbReference type="GO" id="GO:0006468">
    <property type="term" value="P:protein phosphorylation"/>
    <property type="evidence" value="ECO:0000250"/>
    <property type="project" value="UniProtKB"/>
</dbReference>
<dbReference type="GO" id="GO:0016055">
    <property type="term" value="P:Wnt signaling pathway"/>
    <property type="evidence" value="ECO:0007669"/>
    <property type="project" value="UniProtKB-KW"/>
</dbReference>
<dbReference type="CDD" id="cd14128">
    <property type="entry name" value="STKc_CK1_alpha"/>
    <property type="match status" value="1"/>
</dbReference>
<dbReference type="FunFam" id="1.10.510.10:FF:000120">
    <property type="entry name" value="Casein kinase I isoform alpha"/>
    <property type="match status" value="1"/>
</dbReference>
<dbReference type="FunFam" id="3.30.200.20:FF:000538">
    <property type="entry name" value="Putative Casein kinase I"/>
    <property type="match status" value="1"/>
</dbReference>
<dbReference type="Gene3D" id="1.10.510.10">
    <property type="entry name" value="Transferase(Phosphotransferase) domain 1"/>
    <property type="match status" value="1"/>
</dbReference>
<dbReference type="InterPro" id="IPR050235">
    <property type="entry name" value="CK1_Ser-Thr_kinase"/>
</dbReference>
<dbReference type="InterPro" id="IPR011009">
    <property type="entry name" value="Kinase-like_dom_sf"/>
</dbReference>
<dbReference type="InterPro" id="IPR000719">
    <property type="entry name" value="Prot_kinase_dom"/>
</dbReference>
<dbReference type="InterPro" id="IPR017441">
    <property type="entry name" value="Protein_kinase_ATP_BS"/>
</dbReference>
<dbReference type="InterPro" id="IPR008271">
    <property type="entry name" value="Ser/Thr_kinase_AS"/>
</dbReference>
<dbReference type="PANTHER" id="PTHR11909">
    <property type="entry name" value="CASEIN KINASE-RELATED"/>
    <property type="match status" value="1"/>
</dbReference>
<dbReference type="Pfam" id="PF00069">
    <property type="entry name" value="Pkinase"/>
    <property type="match status" value="1"/>
</dbReference>
<dbReference type="SMART" id="SM00220">
    <property type="entry name" value="S_TKc"/>
    <property type="match status" value="1"/>
</dbReference>
<dbReference type="SUPFAM" id="SSF56112">
    <property type="entry name" value="Protein kinase-like (PK-like)"/>
    <property type="match status" value="1"/>
</dbReference>
<dbReference type="PROSITE" id="PS00107">
    <property type="entry name" value="PROTEIN_KINASE_ATP"/>
    <property type="match status" value="1"/>
</dbReference>
<dbReference type="PROSITE" id="PS50011">
    <property type="entry name" value="PROTEIN_KINASE_DOM"/>
    <property type="match status" value="1"/>
</dbReference>
<dbReference type="PROSITE" id="PS00108">
    <property type="entry name" value="PROTEIN_KINASE_ST"/>
    <property type="match status" value="1"/>
</dbReference>